<dbReference type="EC" id="7.2.1.4" evidence="1"/>
<dbReference type="EMBL" id="CP000102">
    <property type="protein sequence ID" value="ABC56714.1"/>
    <property type="molecule type" value="Genomic_DNA"/>
</dbReference>
<dbReference type="RefSeq" id="WP_011405914.1">
    <property type="nucleotide sequence ID" value="NC_007681.1"/>
</dbReference>
<dbReference type="SMR" id="Q2NI29"/>
<dbReference type="STRING" id="339860.Msp_0304"/>
<dbReference type="GeneID" id="41324877"/>
<dbReference type="KEGG" id="mst:Msp_0304"/>
<dbReference type="eggNOG" id="arCOG03221">
    <property type="taxonomic scope" value="Archaea"/>
</dbReference>
<dbReference type="HOGENOM" id="CLU_100863_0_0_2"/>
<dbReference type="OrthoDB" id="130682at2157"/>
<dbReference type="UniPathway" id="UPA00640">
    <property type="reaction ID" value="UER00698"/>
</dbReference>
<dbReference type="Proteomes" id="UP000001931">
    <property type="component" value="Chromosome"/>
</dbReference>
<dbReference type="GO" id="GO:0005886">
    <property type="term" value="C:plasma membrane"/>
    <property type="evidence" value="ECO:0007669"/>
    <property type="project" value="UniProtKB-SubCell"/>
</dbReference>
<dbReference type="GO" id="GO:0050897">
    <property type="term" value="F:cobalt ion binding"/>
    <property type="evidence" value="ECO:0007669"/>
    <property type="project" value="InterPro"/>
</dbReference>
<dbReference type="GO" id="GO:0030269">
    <property type="term" value="F:tetrahydromethanopterin S-methyltransferase activity"/>
    <property type="evidence" value="ECO:0007669"/>
    <property type="project" value="UniProtKB-UniRule"/>
</dbReference>
<dbReference type="GO" id="GO:0019386">
    <property type="term" value="P:methanogenesis, from carbon dioxide"/>
    <property type="evidence" value="ECO:0007669"/>
    <property type="project" value="UniProtKB-UniRule"/>
</dbReference>
<dbReference type="GO" id="GO:0032259">
    <property type="term" value="P:methylation"/>
    <property type="evidence" value="ECO:0007669"/>
    <property type="project" value="UniProtKB-KW"/>
</dbReference>
<dbReference type="GO" id="GO:0006730">
    <property type="term" value="P:one-carbon metabolic process"/>
    <property type="evidence" value="ECO:0007669"/>
    <property type="project" value="UniProtKB-UniRule"/>
</dbReference>
<dbReference type="HAMAP" id="MF_01093">
    <property type="entry name" value="MtrA"/>
    <property type="match status" value="1"/>
</dbReference>
<dbReference type="InterPro" id="IPR030688">
    <property type="entry name" value="MeTrfase_MtrA/MtxA"/>
</dbReference>
<dbReference type="InterPro" id="IPR005778">
    <property type="entry name" value="MtrA"/>
</dbReference>
<dbReference type="NCBIfam" id="TIGR01111">
    <property type="entry name" value="mtrA"/>
    <property type="match status" value="1"/>
</dbReference>
<dbReference type="NCBIfam" id="NF002126">
    <property type="entry name" value="PRK00964.1-4"/>
    <property type="match status" value="1"/>
</dbReference>
<dbReference type="Pfam" id="PF04208">
    <property type="entry name" value="MtrA"/>
    <property type="match status" value="1"/>
</dbReference>
<dbReference type="PIRSF" id="PIRSF500207">
    <property type="entry name" value="MtrA"/>
    <property type="match status" value="1"/>
</dbReference>
<dbReference type="PIRSF" id="PIRSF009452">
    <property type="entry name" value="MtrA_MtxA"/>
    <property type="match status" value="1"/>
</dbReference>
<name>MTRA_METST</name>
<gene>
    <name evidence="1" type="primary">mtrA</name>
    <name type="ordered locus">Msp_0304</name>
</gene>
<sequence>MADKKEVIQNWPLETGDYAVGNVESPVAVVSLGSNMNDELVAAGAAISGPLHTENLGIEKVVANIISNSNIRYVLICGSEVQGHITGKTVEALYENGIDEEKKSIIGSPGAIPFVENLPVEAVERFQKQVSIVSMINNEDVSEISSKIDECISNDPGAYDEDAMIVEFNETPEEEFEVDEVTFSDDSAVDLASIVLLEVENRISMMNNEIKQIASLEKISSGYYAGKIEGIVIGFILTLVFLIIIIQGL</sequence>
<comment type="function">
    <text evidence="1">Part of a complex that catalyzes the formation of methyl-coenzyme M and tetrahydromethanopterin from coenzyme M and methyl-tetrahydromethanopterin. This is an energy-conserving, sodium-ion translocating step.</text>
</comment>
<comment type="catalytic activity">
    <reaction evidence="1">
        <text>5-methyl-5,6,7,8-tetrahydromethanopterin + coenzyme M + 2 Na(+)(in) = 5,6,7,8-tetrahydromethanopterin + methyl-coenzyme M + 2 Na(+)(out)</text>
        <dbReference type="Rhea" id="RHEA:53492"/>
        <dbReference type="ChEBI" id="CHEBI:29101"/>
        <dbReference type="ChEBI" id="CHEBI:58103"/>
        <dbReference type="ChEBI" id="CHEBI:58116"/>
        <dbReference type="ChEBI" id="CHEBI:58286"/>
        <dbReference type="ChEBI" id="CHEBI:58319"/>
        <dbReference type="EC" id="7.2.1.4"/>
    </reaction>
</comment>
<comment type="cofactor">
    <cofactor evidence="1">
        <name>5-hydroxybenzimidazolylcob(I)amide</name>
        <dbReference type="ChEBI" id="CHEBI:60494"/>
    </cofactor>
    <text evidence="1">Binds 1 5-hydroxybenzimidazolylcobamide group.</text>
</comment>
<comment type="pathway">
    <text evidence="1">One-carbon metabolism; methanogenesis from CO(2); methyl-coenzyme M from 5,10-methylene-5,6,7,8-tetrahydromethanopterin: step 2/2.</text>
</comment>
<comment type="subunit">
    <text evidence="1">The complex is composed of 8 subunits; MtrA, MtrB, MtrC, MtrD, MtrE, MtrF, MtrG and MtrH.</text>
</comment>
<comment type="subcellular location">
    <subcellularLocation>
        <location evidence="1">Cell membrane</location>
        <topology evidence="1">Single-pass membrane protein</topology>
    </subcellularLocation>
</comment>
<comment type="similarity">
    <text evidence="1">Belongs to the MtrA family.</text>
</comment>
<evidence type="ECO:0000255" key="1">
    <source>
        <dbReference type="HAMAP-Rule" id="MF_01093"/>
    </source>
</evidence>
<accession>Q2NI29</accession>
<proteinExistence type="inferred from homology"/>
<protein>
    <recommendedName>
        <fullName evidence="1">Tetrahydromethanopterin S-methyltransferase subunit A</fullName>
        <ecNumber evidence="1">7.2.1.4</ecNumber>
    </recommendedName>
    <alternativeName>
        <fullName evidence="1">N5-methyltetrahydromethanopterin--coenzyme M methyltransferase subunit A</fullName>
    </alternativeName>
</protein>
<keyword id="KW-1003">Cell membrane</keyword>
<keyword id="KW-0170">Cobalt</keyword>
<keyword id="KW-0472">Membrane</keyword>
<keyword id="KW-0484">Methanogenesis</keyword>
<keyword id="KW-0489">Methyltransferase</keyword>
<keyword id="KW-0554">One-carbon metabolism</keyword>
<keyword id="KW-1185">Reference proteome</keyword>
<keyword id="KW-0808">Transferase</keyword>
<keyword id="KW-1278">Translocase</keyword>
<keyword id="KW-0812">Transmembrane</keyword>
<keyword id="KW-1133">Transmembrane helix</keyword>
<organism>
    <name type="scientific">Methanosphaera stadtmanae (strain ATCC 43021 / DSM 3091 / JCM 11832 / MCB-3)</name>
    <dbReference type="NCBI Taxonomy" id="339860"/>
    <lineage>
        <taxon>Archaea</taxon>
        <taxon>Methanobacteriati</taxon>
        <taxon>Methanobacteriota</taxon>
        <taxon>Methanomada group</taxon>
        <taxon>Methanobacteria</taxon>
        <taxon>Methanobacteriales</taxon>
        <taxon>Methanobacteriaceae</taxon>
        <taxon>Methanosphaera</taxon>
    </lineage>
</organism>
<reference key="1">
    <citation type="journal article" date="2006" name="J. Bacteriol.">
        <title>The genome sequence of Methanosphaera stadtmanae reveals why this human intestinal archaeon is restricted to methanol and H2 for methane formation and ATP synthesis.</title>
        <authorList>
            <person name="Fricke W.F."/>
            <person name="Seedorf H."/>
            <person name="Henne A."/>
            <person name="Kruer M."/>
            <person name="Liesegang H."/>
            <person name="Hedderich R."/>
            <person name="Gottschalk G."/>
            <person name="Thauer R.K."/>
        </authorList>
    </citation>
    <scope>NUCLEOTIDE SEQUENCE [LARGE SCALE GENOMIC DNA]</scope>
    <source>
        <strain>ATCC 43021 / DSM 3091 / JCM 11832 / MCB-3</strain>
    </source>
</reference>
<feature type="chain" id="PRO_0000403067" description="Tetrahydromethanopterin S-methyltransferase subunit A">
    <location>
        <begin position="1"/>
        <end position="249"/>
    </location>
</feature>
<feature type="topological domain" description="Cytoplasmic" evidence="1">
    <location>
        <begin position="1"/>
        <end position="227"/>
    </location>
</feature>
<feature type="transmembrane region" description="Helical" evidence="1">
    <location>
        <begin position="228"/>
        <end position="248"/>
    </location>
</feature>
<feature type="topological domain" description="Extracellular" evidence="1">
    <location>
        <position position="249"/>
    </location>
</feature>
<feature type="binding site" evidence="1">
    <location>
        <position position="84"/>
    </location>
    <ligand>
        <name>5-hydroxybenzimidazolylcob(I)amide</name>
        <dbReference type="ChEBI" id="CHEBI:60494"/>
        <note>cofactor</note>
    </ligand>
</feature>